<dbReference type="EC" id="1.1.1.318"/>
<dbReference type="EMBL" id="EF467241">
    <property type="protein sequence ID" value="ABR24115.1"/>
    <property type="molecule type" value="mRNA"/>
</dbReference>
<dbReference type="SMR" id="B2WSN1"/>
<dbReference type="BioCyc" id="MetaCyc:MONOMER-13833"/>
<dbReference type="BRENDA" id="1.1.1.318">
    <property type="organism ID" value="4700"/>
</dbReference>
<dbReference type="UniPathway" id="UPA00711"/>
<dbReference type="GO" id="GO:0000166">
    <property type="term" value="F:nucleotide binding"/>
    <property type="evidence" value="ECO:0007669"/>
    <property type="project" value="UniProtKB-KW"/>
</dbReference>
<dbReference type="GO" id="GO:0016491">
    <property type="term" value="F:oxidoreductase activity"/>
    <property type="evidence" value="ECO:0007669"/>
    <property type="project" value="UniProtKB-KW"/>
</dbReference>
<dbReference type="GO" id="GO:0009699">
    <property type="term" value="P:phenylpropanoid biosynthetic process"/>
    <property type="evidence" value="ECO:0007669"/>
    <property type="project" value="UniProtKB-UniPathway"/>
</dbReference>
<dbReference type="CDD" id="cd05259">
    <property type="entry name" value="PCBER_SDR_a"/>
    <property type="match status" value="1"/>
</dbReference>
<dbReference type="FunFam" id="3.40.50.720:FF:000299">
    <property type="entry name" value="Bifunctional pinoresinol-lariciresinol reductase 1"/>
    <property type="match status" value="1"/>
</dbReference>
<dbReference type="Gene3D" id="3.40.50.720">
    <property type="entry name" value="NAD(P)-binding Rossmann-like Domain"/>
    <property type="match status" value="1"/>
</dbReference>
<dbReference type="Gene3D" id="3.90.25.10">
    <property type="entry name" value="UDP-galactose 4-epimerase, domain 1"/>
    <property type="match status" value="1"/>
</dbReference>
<dbReference type="InterPro" id="IPR036291">
    <property type="entry name" value="NAD(P)-bd_dom_sf"/>
</dbReference>
<dbReference type="InterPro" id="IPR008030">
    <property type="entry name" value="NmrA-like"/>
</dbReference>
<dbReference type="InterPro" id="IPR050608">
    <property type="entry name" value="NmrA-type/Isoflavone_red_sf"/>
</dbReference>
<dbReference type="InterPro" id="IPR045312">
    <property type="entry name" value="PCBER-like"/>
</dbReference>
<dbReference type="PANTHER" id="PTHR43349:SF93">
    <property type="entry name" value="ISOFLAVONE REDUCTASE HOMOLOG P3-RELATED"/>
    <property type="match status" value="1"/>
</dbReference>
<dbReference type="PANTHER" id="PTHR43349">
    <property type="entry name" value="PINORESINOL REDUCTASE-RELATED"/>
    <property type="match status" value="1"/>
</dbReference>
<dbReference type="Pfam" id="PF05368">
    <property type="entry name" value="NmrA"/>
    <property type="match status" value="1"/>
</dbReference>
<dbReference type="SUPFAM" id="SSF51735">
    <property type="entry name" value="NAD(P)-binding Rossmann-fold domains"/>
    <property type="match status" value="1"/>
</dbReference>
<sequence length="308" mass="33807">MAEKSKILIIGGTGYIGKFVVEASAKAGHPTFVLVRESTVSDPAKGKIVESFNNSGVTILYGDLYDHESLVKAIKQVDVVISTVGQMQLADQTKIIAAIKEAGNIKRFFPSEFGMDVDKVNAVEPAKSTFAIKVQIRRAIEAEGIPYTYVSSNCFAGYFLPTLVQPGATDPPRDKVIISGDGNAKAVFNEEHDIGTYTIKAVDDPRTLNKTLYIKPPKNTLSFNELVAIWEKLIGKTLEKIYIPEEQILKDIATSPIPINIILAINHSTFVKGDQTNFVIEPSFGVEASELYPDVKYTTVEEYLSHFA</sequence>
<reference key="1">
    <citation type="journal article" date="2008" name="Plant J.">
        <title>The multiple phenylpropene synthases in both Clarkia breweri and Petunia hybrida represent two distinct protein lineages.</title>
        <authorList>
            <person name="Koeduka T."/>
            <person name="Louie G.V."/>
            <person name="Orlova I."/>
            <person name="Kish C.M."/>
            <person name="Ibdah M."/>
            <person name="Wilkerson C.G."/>
            <person name="Bowman M.E."/>
            <person name="Baiga T.J."/>
            <person name="Noel J.P."/>
            <person name="Dudareva N."/>
            <person name="Pichersky E."/>
        </authorList>
    </citation>
    <scope>NUCLEOTIDE SEQUENCE [MRNA]</scope>
    <scope>FUNCTION</scope>
    <scope>MUTAGENESIS OF GLN-86 AND LEU-89</scope>
    <scope>CATALYTIC ACTIVITY</scope>
    <scope>PATHWAY</scope>
    <scope>TISSUE SPECIFICITY</scope>
    <scope>BIOPHYSICOCHEMICAL PROPERTIES</scope>
    <scope>GENE FAMILY</scope>
    <scope>NOMENCLATURE</scope>
</reference>
<reference key="2">
    <citation type="journal article" date="2012" name="Plant Cell">
        <title>The R2R3-MYB-like regulatory factor EOBI, acting downstream of EOBII, regulates scent production by activating ODO1 and structural scent-related genes in petunia.</title>
        <authorList>
            <person name="Spitzer-Rimon B."/>
            <person name="Farhi M."/>
            <person name="Albo B."/>
            <person name="Cna'ani A."/>
            <person name="Ben Zvi M.M."/>
            <person name="Masci T."/>
            <person name="Edelbaum O."/>
            <person name="Yu Y."/>
            <person name="Shklarman E."/>
            <person name="Ovadis M."/>
            <person name="Vainstein A."/>
        </authorList>
    </citation>
    <scope>INDUCTION BY EOBI</scope>
    <source>
        <strain>cv. W115</strain>
    </source>
</reference>
<keyword id="KW-0521">NADP</keyword>
<keyword id="KW-0547">Nucleotide-binding</keyword>
<keyword id="KW-0560">Oxidoreductase</keyword>
<keyword id="KW-0587">Phenylpropanoid metabolism</keyword>
<name>EGS1_PETHY</name>
<proteinExistence type="evidence at protein level"/>
<feature type="chain" id="PRO_0000451500" description="Eugenol synthase 1">
    <location>
        <begin position="1"/>
        <end position="308"/>
    </location>
</feature>
<feature type="active site" description="Proton donor/acceptor" evidence="2">
    <location>
        <position position="133"/>
    </location>
</feature>
<feature type="binding site" evidence="1">
    <location>
        <begin position="13"/>
        <end position="16"/>
    </location>
    <ligand>
        <name>NADP(+)</name>
        <dbReference type="ChEBI" id="CHEBI:58349"/>
    </ligand>
</feature>
<feature type="binding site" evidence="2">
    <location>
        <begin position="35"/>
        <end position="45"/>
    </location>
    <ligand>
        <name>NADP(+)</name>
        <dbReference type="ChEBI" id="CHEBI:58349"/>
    </ligand>
</feature>
<feature type="binding site" evidence="1">
    <location>
        <position position="36"/>
    </location>
    <ligand>
        <name>NADP(+)</name>
        <dbReference type="ChEBI" id="CHEBI:58349"/>
    </ligand>
</feature>
<feature type="binding site" evidence="2">
    <location>
        <begin position="86"/>
        <end position="88"/>
    </location>
    <ligand>
        <name>NADP(+)</name>
        <dbReference type="ChEBI" id="CHEBI:58349"/>
    </ligand>
</feature>
<feature type="binding site" evidence="1">
    <location>
        <begin position="111"/>
        <end position="113"/>
    </location>
    <ligand>
        <name>NADP(+)</name>
        <dbReference type="ChEBI" id="CHEBI:58349"/>
    </ligand>
</feature>
<feature type="binding site" evidence="1">
    <location>
        <position position="133"/>
    </location>
    <ligand>
        <name>NADP(+)</name>
        <dbReference type="ChEBI" id="CHEBI:58349"/>
    </ligand>
</feature>
<feature type="binding site" evidence="1">
    <location>
        <begin position="153"/>
        <end position="155"/>
    </location>
    <ligand>
        <name>NADP(+)</name>
        <dbReference type="ChEBI" id="CHEBI:58349"/>
    </ligand>
</feature>
<feature type="site" description="Confers substrate specificity" evidence="3">
    <location>
        <position position="86"/>
    </location>
</feature>
<feature type="site" description="Confers substrate specificity" evidence="3">
    <location>
        <position position="89"/>
    </location>
</feature>
<feature type="site" description="Required for activity" evidence="2">
    <location>
        <position position="265"/>
    </location>
</feature>
<feature type="mutagenesis site" description="Confers some isoeugenol synthase activity; when associated with Y-89." evidence="3">
    <original>Q</original>
    <variation>V</variation>
    <location>
        <position position="86"/>
    </location>
</feature>
<feature type="mutagenesis site" description="Confers some isoeugenol synthase activity; when associated with V-86." evidence="3">
    <original>L</original>
    <variation>Y</variation>
    <location>
        <position position="89"/>
    </location>
</feature>
<organism>
    <name type="scientific">Petunia hybrida</name>
    <name type="common">Petunia</name>
    <dbReference type="NCBI Taxonomy" id="4102"/>
    <lineage>
        <taxon>Eukaryota</taxon>
        <taxon>Viridiplantae</taxon>
        <taxon>Streptophyta</taxon>
        <taxon>Embryophyta</taxon>
        <taxon>Tracheophyta</taxon>
        <taxon>Spermatophyta</taxon>
        <taxon>Magnoliopsida</taxon>
        <taxon>eudicotyledons</taxon>
        <taxon>Gunneridae</taxon>
        <taxon>Pentapetalae</taxon>
        <taxon>asterids</taxon>
        <taxon>lamiids</taxon>
        <taxon>Solanales</taxon>
        <taxon>Solanaceae</taxon>
        <taxon>Petunioideae</taxon>
        <taxon>Petunia</taxon>
    </lineage>
</organism>
<gene>
    <name evidence="5" type="primary">EGS1</name>
</gene>
<comment type="function">
    <text evidence="3">Involved in the biosynthesis of the floral volatile eugenol (PubMed:18208524). Catalyzes the synthesis of the phenylpropene eugenol from coniferyl acetate (PubMed:18208524). Phenylpropenes are produced by plants as defense compounds with antimicrobial and antianimal properties, or as floral attractants of pollinators (PubMed:18208524).</text>
</comment>
<comment type="catalytic activity">
    <reaction evidence="3">
        <text>eugenol + a carboxylate + NADP(+) = a coniferyl ester + NADPH</text>
        <dbReference type="Rhea" id="RHEA:32655"/>
        <dbReference type="ChEBI" id="CHEBI:4917"/>
        <dbReference type="ChEBI" id="CHEBI:29067"/>
        <dbReference type="ChEBI" id="CHEBI:57783"/>
        <dbReference type="ChEBI" id="CHEBI:58349"/>
        <dbReference type="ChEBI" id="CHEBI:64292"/>
        <dbReference type="EC" id="1.1.1.318"/>
    </reaction>
    <physiologicalReaction direction="right-to-left" evidence="3">
        <dbReference type="Rhea" id="RHEA:32657"/>
    </physiologicalReaction>
</comment>
<comment type="catalytic activity">
    <reaction evidence="3">
        <text>eugenol + acetate + NADP(+) = (E)-coniferyl acetate + NADPH</text>
        <dbReference type="Rhea" id="RHEA:24690"/>
        <dbReference type="ChEBI" id="CHEBI:4917"/>
        <dbReference type="ChEBI" id="CHEBI:30089"/>
        <dbReference type="ChEBI" id="CHEBI:47905"/>
        <dbReference type="ChEBI" id="CHEBI:57783"/>
        <dbReference type="ChEBI" id="CHEBI:58349"/>
        <dbReference type="EC" id="1.1.1.318"/>
    </reaction>
    <physiologicalReaction direction="right-to-left" evidence="3">
        <dbReference type="Rhea" id="RHEA:24692"/>
    </physiologicalReaction>
</comment>
<comment type="biophysicochemical properties">
    <kinetics>
        <KM evidence="3">245.3 uM for coniferyl acetate</KM>
        <Vmax evidence="3">18.4 nmol/sec/mg enzyme with coniferyl acetate as substrate</Vmax>
        <text evidence="3">kcat is 0.60 sec(-1) with coniferyl acetate as substrate.</text>
    </kinetics>
</comment>
<comment type="pathway">
    <text evidence="3">Aromatic compound metabolism; phenylpropanoid biosynthesis.</text>
</comment>
<comment type="tissue specificity">
    <text evidence="3">In flowers, mostly expressed in limbs, and, to a lower extent, in tubes.</text>
</comment>
<comment type="induction">
    <text evidence="4">Triggered by EOBI in flowers.</text>
</comment>
<comment type="similarity">
    <text evidence="6">Belongs to the NmrA-type oxidoreductase family.</text>
</comment>
<evidence type="ECO:0000250" key="1">
    <source>
        <dbReference type="UniProtKB" id="D0VWT0"/>
    </source>
</evidence>
<evidence type="ECO:0000250" key="2">
    <source>
        <dbReference type="UniProtKB" id="Q15GI4"/>
    </source>
</evidence>
<evidence type="ECO:0000269" key="3">
    <source>
    </source>
</evidence>
<evidence type="ECO:0000269" key="4">
    <source>
    </source>
</evidence>
<evidence type="ECO:0000303" key="5">
    <source>
    </source>
</evidence>
<evidence type="ECO:0000305" key="6"/>
<protein>
    <recommendedName>
        <fullName evidence="5">Eugenol synthase 1</fullName>
        <shortName evidence="5">PhEGS1</shortName>
        <ecNumber>1.1.1.318</ecNumber>
    </recommendedName>
</protein>
<accession>B2WSN1</accession>